<comment type="function">
    <text>Endothelins are endothelium-derived vasoconstrictor peptides.</text>
</comment>
<comment type="subcellular location">
    <subcellularLocation>
        <location>Secreted</location>
    </subcellularLocation>
</comment>
<comment type="tissue specificity">
    <text evidence="4">Expressed in lung, but not in placental stem villi vessels or cultured placental villi smooth muscle cells.</text>
</comment>
<comment type="similarity">
    <text evidence="6">Belongs to the endothelin/sarafotoxin family.</text>
</comment>
<protein>
    <recommendedName>
        <fullName>Endothelin-2</fullName>
        <shortName>ET-2</shortName>
    </recommendedName>
    <alternativeName>
        <fullName>Preproendothelin-2</fullName>
        <shortName>PPET2</shortName>
    </alternativeName>
</protein>
<accession>P20800</accession>
<accession>Q5T1R3</accession>
<reference key="1">
    <citation type="journal article" date="1990" name="FEBS Lett.">
        <title>Specific expression of human endothelin-2 (ET-2) gene in a renal adenocarcinoma cell line. Molecular cloning of cDNA encoding the precursor of ET-2 and its characterization.</title>
        <authorList>
            <person name="Ohkubo S."/>
            <person name="Ogi K."/>
            <person name="Hosoya M."/>
            <person name="Matsumoto H."/>
            <person name="Suzuki N."/>
            <person name="Kimura C."/>
            <person name="Onda H."/>
            <person name="Fujino M."/>
        </authorList>
    </citation>
    <scope>NUCLEOTIDE SEQUENCE [MRNA]</scope>
</reference>
<reference key="2">
    <citation type="journal article" date="1991" name="Genomics">
        <title>cDNA cloning and chromosomal assignment of the endothelin 2 gene: vasoactive intestinal contractor peptide is rat endothelin 2.</title>
        <authorList>
            <person name="Bloch K.D."/>
            <person name="Hong C.C."/>
            <person name="Eddy R.L. Jr."/>
            <person name="Shows T.B."/>
            <person name="Quertermous T."/>
        </authorList>
    </citation>
    <scope>NUCLEOTIDE SEQUENCE [MRNA]</scope>
</reference>
<reference key="3">
    <citation type="journal article" date="1991" name="J. Cardiovasc. Pharmacol.">
        <title>Expression of endothelin-2 (ET-2) gene in a human renal adenocarcinoma cell line: purification and cDNA cloning of ET-2.</title>
        <authorList>
            <person name="Onda H."/>
            <person name="Ohkubo S."/>
            <person name="Kosaka T."/>
            <person name="Yasuhara T."/>
            <person name="Ogi K."/>
            <person name="Hosoya M."/>
            <person name="Matsumoto H."/>
            <person name="Suzuki N."/>
            <person name="Kitada C."/>
            <person name="Ishibashi Y."/>
            <person name="Kimura C."/>
            <person name="Kubo K."/>
            <person name="Fujino M."/>
        </authorList>
    </citation>
    <scope>NUCLEOTIDE SEQUENCE [MRNA]</scope>
</reference>
<reference key="4">
    <citation type="submission" date="2004-01" db="EMBL/GenBank/DDBJ databases">
        <authorList>
            <consortium name="NIEHS SNPs program"/>
        </authorList>
    </citation>
    <scope>NUCLEOTIDE SEQUENCE [GENOMIC DNA]</scope>
    <scope>VARIANT LEU-168</scope>
</reference>
<reference key="5">
    <citation type="journal article" date="2006" name="Nature">
        <title>The DNA sequence and biological annotation of human chromosome 1.</title>
        <authorList>
            <person name="Gregory S.G."/>
            <person name="Barlow K.F."/>
            <person name="McLay K.E."/>
            <person name="Kaul R."/>
            <person name="Swarbreck D."/>
            <person name="Dunham A."/>
            <person name="Scott C.E."/>
            <person name="Howe K.L."/>
            <person name="Woodfine K."/>
            <person name="Spencer C.C.A."/>
            <person name="Jones M.C."/>
            <person name="Gillson C."/>
            <person name="Searle S."/>
            <person name="Zhou Y."/>
            <person name="Kokocinski F."/>
            <person name="McDonald L."/>
            <person name="Evans R."/>
            <person name="Phillips K."/>
            <person name="Atkinson A."/>
            <person name="Cooper R."/>
            <person name="Jones C."/>
            <person name="Hall R.E."/>
            <person name="Andrews T.D."/>
            <person name="Lloyd C."/>
            <person name="Ainscough R."/>
            <person name="Almeida J.P."/>
            <person name="Ambrose K.D."/>
            <person name="Anderson F."/>
            <person name="Andrew R.W."/>
            <person name="Ashwell R.I.S."/>
            <person name="Aubin K."/>
            <person name="Babbage A.K."/>
            <person name="Bagguley C.L."/>
            <person name="Bailey J."/>
            <person name="Beasley H."/>
            <person name="Bethel G."/>
            <person name="Bird C.P."/>
            <person name="Bray-Allen S."/>
            <person name="Brown J.Y."/>
            <person name="Brown A.J."/>
            <person name="Buckley D."/>
            <person name="Burton J."/>
            <person name="Bye J."/>
            <person name="Carder C."/>
            <person name="Chapman J.C."/>
            <person name="Clark S.Y."/>
            <person name="Clarke G."/>
            <person name="Clee C."/>
            <person name="Cobley V."/>
            <person name="Collier R.E."/>
            <person name="Corby N."/>
            <person name="Coville G.J."/>
            <person name="Davies J."/>
            <person name="Deadman R."/>
            <person name="Dunn M."/>
            <person name="Earthrowl M."/>
            <person name="Ellington A.G."/>
            <person name="Errington H."/>
            <person name="Frankish A."/>
            <person name="Frankland J."/>
            <person name="French L."/>
            <person name="Garner P."/>
            <person name="Garnett J."/>
            <person name="Gay L."/>
            <person name="Ghori M.R.J."/>
            <person name="Gibson R."/>
            <person name="Gilby L.M."/>
            <person name="Gillett W."/>
            <person name="Glithero R.J."/>
            <person name="Grafham D.V."/>
            <person name="Griffiths C."/>
            <person name="Griffiths-Jones S."/>
            <person name="Grocock R."/>
            <person name="Hammond S."/>
            <person name="Harrison E.S.I."/>
            <person name="Hart E."/>
            <person name="Haugen E."/>
            <person name="Heath P.D."/>
            <person name="Holmes S."/>
            <person name="Holt K."/>
            <person name="Howden P.J."/>
            <person name="Hunt A.R."/>
            <person name="Hunt S.E."/>
            <person name="Hunter G."/>
            <person name="Isherwood J."/>
            <person name="James R."/>
            <person name="Johnson C."/>
            <person name="Johnson D."/>
            <person name="Joy A."/>
            <person name="Kay M."/>
            <person name="Kershaw J.K."/>
            <person name="Kibukawa M."/>
            <person name="Kimberley A.M."/>
            <person name="King A."/>
            <person name="Knights A.J."/>
            <person name="Lad H."/>
            <person name="Laird G."/>
            <person name="Lawlor S."/>
            <person name="Leongamornlert D.A."/>
            <person name="Lloyd D.M."/>
            <person name="Loveland J."/>
            <person name="Lovell J."/>
            <person name="Lush M.J."/>
            <person name="Lyne R."/>
            <person name="Martin S."/>
            <person name="Mashreghi-Mohammadi M."/>
            <person name="Matthews L."/>
            <person name="Matthews N.S.W."/>
            <person name="McLaren S."/>
            <person name="Milne S."/>
            <person name="Mistry S."/>
            <person name="Moore M.J.F."/>
            <person name="Nickerson T."/>
            <person name="O'Dell C.N."/>
            <person name="Oliver K."/>
            <person name="Palmeiri A."/>
            <person name="Palmer S.A."/>
            <person name="Parker A."/>
            <person name="Patel D."/>
            <person name="Pearce A.V."/>
            <person name="Peck A.I."/>
            <person name="Pelan S."/>
            <person name="Phelps K."/>
            <person name="Phillimore B.J."/>
            <person name="Plumb R."/>
            <person name="Rajan J."/>
            <person name="Raymond C."/>
            <person name="Rouse G."/>
            <person name="Saenphimmachak C."/>
            <person name="Sehra H.K."/>
            <person name="Sheridan E."/>
            <person name="Shownkeen R."/>
            <person name="Sims S."/>
            <person name="Skuce C.D."/>
            <person name="Smith M."/>
            <person name="Steward C."/>
            <person name="Subramanian S."/>
            <person name="Sycamore N."/>
            <person name="Tracey A."/>
            <person name="Tromans A."/>
            <person name="Van Helmond Z."/>
            <person name="Wall M."/>
            <person name="Wallis J.M."/>
            <person name="White S."/>
            <person name="Whitehead S.L."/>
            <person name="Wilkinson J.E."/>
            <person name="Willey D.L."/>
            <person name="Williams H."/>
            <person name="Wilming L."/>
            <person name="Wray P.W."/>
            <person name="Wu Z."/>
            <person name="Coulson A."/>
            <person name="Vaudin M."/>
            <person name="Sulston J.E."/>
            <person name="Durbin R.M."/>
            <person name="Hubbard T."/>
            <person name="Wooster R."/>
            <person name="Dunham I."/>
            <person name="Carter N.P."/>
            <person name="McVean G."/>
            <person name="Ross M.T."/>
            <person name="Harrow J."/>
            <person name="Olson M.V."/>
            <person name="Beck S."/>
            <person name="Rogers J."/>
            <person name="Bentley D.R."/>
        </authorList>
    </citation>
    <scope>NUCLEOTIDE SEQUENCE [LARGE SCALE GENOMIC DNA]</scope>
</reference>
<reference key="6">
    <citation type="submission" date="2005-09" db="EMBL/GenBank/DDBJ databases">
        <authorList>
            <person name="Mural R.J."/>
            <person name="Istrail S."/>
            <person name="Sutton G.G."/>
            <person name="Florea L."/>
            <person name="Halpern A.L."/>
            <person name="Mobarry C.M."/>
            <person name="Lippert R."/>
            <person name="Walenz B."/>
            <person name="Shatkay H."/>
            <person name="Dew I."/>
            <person name="Miller J.R."/>
            <person name="Flanigan M.J."/>
            <person name="Edwards N.J."/>
            <person name="Bolanos R."/>
            <person name="Fasulo D."/>
            <person name="Halldorsson B.V."/>
            <person name="Hannenhalli S."/>
            <person name="Turner R."/>
            <person name="Yooseph S."/>
            <person name="Lu F."/>
            <person name="Nusskern D.R."/>
            <person name="Shue B.C."/>
            <person name="Zheng X.H."/>
            <person name="Zhong F."/>
            <person name="Delcher A.L."/>
            <person name="Huson D.H."/>
            <person name="Kravitz S.A."/>
            <person name="Mouchard L."/>
            <person name="Reinert K."/>
            <person name="Remington K.A."/>
            <person name="Clark A.G."/>
            <person name="Waterman M.S."/>
            <person name="Eichler E.E."/>
            <person name="Adams M.D."/>
            <person name="Hunkapiller M.W."/>
            <person name="Myers E.W."/>
            <person name="Venter J.C."/>
        </authorList>
    </citation>
    <scope>NUCLEOTIDE SEQUENCE [LARGE SCALE GENOMIC DNA]</scope>
</reference>
<reference key="7">
    <citation type="journal article" date="2004" name="Genome Res.">
        <title>The status, quality, and expansion of the NIH full-length cDNA project: the Mammalian Gene Collection (MGC).</title>
        <authorList>
            <consortium name="The MGC Project Team"/>
        </authorList>
    </citation>
    <scope>NUCLEOTIDE SEQUENCE [LARGE SCALE MRNA]</scope>
    <source>
        <tissue>Colon</tissue>
        <tissue>Kidney</tissue>
        <tissue>Stomach</tissue>
    </source>
</reference>
<reference key="8">
    <citation type="journal article" date="1989" name="Proc. Natl. Acad. Sci. U.S.A.">
        <title>The human endothelin family: three structurally and pharmacologically distinct isopeptides predicted by three separate genes.</title>
        <authorList>
            <person name="Inoue A."/>
            <person name="Yanagisawa M."/>
            <person name="Kimura S."/>
            <person name="Kasuya Y."/>
            <person name="Miyauchi T."/>
            <person name="Goto K."/>
            <person name="Masaki T."/>
        </authorList>
    </citation>
    <scope>NUCLEOTIDE SEQUENCE [GENOMIC DNA] OF 22-73</scope>
</reference>
<reference key="9">
    <citation type="journal article" date="1999" name="Blood">
        <title>Proteolytic processing of big endothelin-3 by the kell blood group protein.</title>
        <authorList>
            <person name="Lee S."/>
            <person name="Lin M."/>
            <person name="Mele A."/>
            <person name="Cao Y."/>
            <person name="Farmar J."/>
            <person name="Russo D."/>
            <person name="Redman C."/>
        </authorList>
    </citation>
    <scope>PARTIAL PROTEIN SEQUENCE</scope>
    <scope>CLEAVAGE BY KELL</scope>
    <scope>IDENTIFICATION BY MASS SPECTROMETRY</scope>
</reference>
<reference key="10">
    <citation type="journal article" date="1997" name="J. Clin. Endocrinol. Metab.">
        <title>Endothelin-1 and ETA receptor expression in vascular smooth muscle cells from human placenta: a new ETA receptor messenger ribonucleic acid is generated by alternative splicing of exon 3.</title>
        <authorList>
            <person name="Bourgeois C."/>
            <person name="Robert B."/>
            <person name="Rebourcet R."/>
            <person name="Mondon F."/>
            <person name="Mignot T.-M."/>
            <person name="Duc-Goiran P."/>
            <person name="Ferre F."/>
        </authorList>
    </citation>
    <scope>TISSUE SPECIFICITY</scope>
</reference>
<organism>
    <name type="scientific">Homo sapiens</name>
    <name type="common">Human</name>
    <dbReference type="NCBI Taxonomy" id="9606"/>
    <lineage>
        <taxon>Eukaryota</taxon>
        <taxon>Metazoa</taxon>
        <taxon>Chordata</taxon>
        <taxon>Craniata</taxon>
        <taxon>Vertebrata</taxon>
        <taxon>Euteleostomi</taxon>
        <taxon>Mammalia</taxon>
        <taxon>Eutheria</taxon>
        <taxon>Euarchontoglires</taxon>
        <taxon>Primates</taxon>
        <taxon>Haplorrhini</taxon>
        <taxon>Catarrhini</taxon>
        <taxon>Hominidae</taxon>
        <taxon>Homo</taxon>
    </lineage>
</organism>
<name>EDN2_HUMAN</name>
<gene>
    <name type="primary">EDN2</name>
</gene>
<sequence length="178" mass="19960">MVSVPTTWCSVALALLVALHEGKGQAAATLEQPASSSHAQGTHLRLRRCSCSSWLDKECVYFCHLDIIWVNTPEQTAPYGLGNPPRRRRRSLPRRCQCSSARDPACATFCLRRPWTEAGAVPSRKSPADVFQTGKTGATTGELLQRLRDISTVKSLFAKRQQEAMREPRSTHSRWRKR</sequence>
<keyword id="KW-0165">Cleavage on pair of basic residues</keyword>
<keyword id="KW-0903">Direct protein sequencing</keyword>
<keyword id="KW-1015">Disulfide bond</keyword>
<keyword id="KW-1267">Proteomics identification</keyword>
<keyword id="KW-1185">Reference proteome</keyword>
<keyword id="KW-0964">Secreted</keyword>
<keyword id="KW-0732">Signal</keyword>
<keyword id="KW-0838">Vasoactive</keyword>
<keyword id="KW-0839">Vasoconstrictor</keyword>
<feature type="signal peptide" evidence="2">
    <location>
        <begin position="1"/>
        <end position="24"/>
    </location>
</feature>
<feature type="propeptide" id="PRO_0000008093">
    <location>
        <begin position="25"/>
        <end position="46"/>
    </location>
</feature>
<feature type="peptide" id="PRO_0000008094" description="Endothelin-2">
    <location>
        <begin position="49"/>
        <end position="69"/>
    </location>
</feature>
<feature type="propeptide" id="PRO_0000008095">
    <location>
        <begin position="70"/>
        <end position="178"/>
    </location>
</feature>
<feature type="region of interest" description="Endothelin-like">
    <location>
        <begin position="96"/>
        <end position="111"/>
    </location>
</feature>
<feature type="region of interest" description="Disordered" evidence="3">
    <location>
        <begin position="159"/>
        <end position="178"/>
    </location>
</feature>
<feature type="compositionally biased region" description="Basic and acidic residues" evidence="3">
    <location>
        <begin position="160"/>
        <end position="170"/>
    </location>
</feature>
<feature type="site" description="Cleavage; by KEL">
    <location>
        <begin position="69"/>
        <end position="70"/>
    </location>
</feature>
<feature type="disulfide bond" evidence="1">
    <location>
        <begin position="49"/>
        <end position="63"/>
    </location>
</feature>
<feature type="disulfide bond" evidence="1">
    <location>
        <begin position="51"/>
        <end position="59"/>
    </location>
</feature>
<feature type="sequence variant" id="VAR_033914" description="In dbSNP:rs5798.">
    <original>F</original>
    <variation>L</variation>
    <location>
        <position position="131"/>
    </location>
</feature>
<feature type="sequence variant" id="VAR_018817" description="In dbSNP:rs11572371." evidence="5">
    <original>P</original>
    <variation>L</variation>
    <location>
        <position position="168"/>
    </location>
</feature>
<dbReference type="EMBL" id="X55177">
    <property type="protein sequence ID" value="CAA38962.1"/>
    <property type="molecule type" value="mRNA"/>
</dbReference>
<dbReference type="EMBL" id="M65199">
    <property type="protein sequence ID" value="AAA52404.1"/>
    <property type="molecule type" value="mRNA"/>
</dbReference>
<dbReference type="EMBL" id="AY518541">
    <property type="protein sequence ID" value="AAR89914.1"/>
    <property type="molecule type" value="Genomic_DNA"/>
</dbReference>
<dbReference type="EMBL" id="AL445933">
    <property type="status" value="NOT_ANNOTATED_CDS"/>
    <property type="molecule type" value="Genomic_DNA"/>
</dbReference>
<dbReference type="EMBL" id="CH471059">
    <property type="protein sequence ID" value="EAX07175.1"/>
    <property type="molecule type" value="Genomic_DNA"/>
</dbReference>
<dbReference type="EMBL" id="BC034393">
    <property type="protein sequence ID" value="AAH34393.1"/>
    <property type="molecule type" value="mRNA"/>
</dbReference>
<dbReference type="EMBL" id="M25550">
    <property type="protein sequence ID" value="AAA52340.1"/>
    <property type="molecule type" value="Genomic_DNA"/>
</dbReference>
<dbReference type="CCDS" id="CCDS462.1"/>
<dbReference type="PIR" id="A39070">
    <property type="entry name" value="A39070"/>
</dbReference>
<dbReference type="RefSeq" id="NP_001289198.1">
    <property type="nucleotide sequence ID" value="NM_001302269.1"/>
</dbReference>
<dbReference type="RefSeq" id="NP_001947.1">
    <property type="nucleotide sequence ID" value="NM_001956.5"/>
</dbReference>
<dbReference type="FunCoup" id="P20800">
    <property type="interactions" value="872"/>
</dbReference>
<dbReference type="STRING" id="9606.ENSP00000361668"/>
<dbReference type="GlyGen" id="P20800">
    <property type="glycosylation" value="4 sites, 1 O-linked glycan (4 sites)"/>
</dbReference>
<dbReference type="iPTMnet" id="P20800"/>
<dbReference type="PhosphoSitePlus" id="P20800"/>
<dbReference type="BioMuta" id="EDN2"/>
<dbReference type="DMDM" id="119615"/>
<dbReference type="MassIVE" id="P20800"/>
<dbReference type="PaxDb" id="9606-ENSP00000361668"/>
<dbReference type="PeptideAtlas" id="P20800"/>
<dbReference type="Antibodypedia" id="32186">
    <property type="antibodies" value="196 antibodies from 26 providers"/>
</dbReference>
<dbReference type="DNASU" id="1907"/>
<dbReference type="Ensembl" id="ENST00000372587.5">
    <property type="protein sequence ID" value="ENSP00000361668.4"/>
    <property type="gene ID" value="ENSG00000127129.10"/>
</dbReference>
<dbReference type="GeneID" id="1907"/>
<dbReference type="KEGG" id="hsa:1907"/>
<dbReference type="MANE-Select" id="ENST00000372587.5">
    <property type="protein sequence ID" value="ENSP00000361668.4"/>
    <property type="RefSeq nucleotide sequence ID" value="NM_001956.5"/>
    <property type="RefSeq protein sequence ID" value="NP_001947.1"/>
</dbReference>
<dbReference type="UCSC" id="uc001cgx.4">
    <property type="organism name" value="human"/>
</dbReference>
<dbReference type="AGR" id="HGNC:3177"/>
<dbReference type="CTD" id="1907"/>
<dbReference type="DisGeNET" id="1907"/>
<dbReference type="GeneCards" id="EDN2"/>
<dbReference type="HGNC" id="HGNC:3177">
    <property type="gene designation" value="EDN2"/>
</dbReference>
<dbReference type="HPA" id="ENSG00000127129">
    <property type="expression patterns" value="Tissue enhanced (cervix, esophagus, vagina)"/>
</dbReference>
<dbReference type="MIM" id="131241">
    <property type="type" value="gene"/>
</dbReference>
<dbReference type="neXtProt" id="NX_P20800"/>
<dbReference type="OpenTargets" id="ENSG00000127129"/>
<dbReference type="PharmGKB" id="PA27615"/>
<dbReference type="VEuPathDB" id="HostDB:ENSG00000127129"/>
<dbReference type="eggNOG" id="ENOG502S5KM">
    <property type="taxonomic scope" value="Eukaryota"/>
</dbReference>
<dbReference type="GeneTree" id="ENSGT00950000183053"/>
<dbReference type="HOGENOM" id="CLU_090013_2_1_1"/>
<dbReference type="InParanoid" id="P20800"/>
<dbReference type="OMA" id="PTAWCSV"/>
<dbReference type="OrthoDB" id="9362154at2759"/>
<dbReference type="PAN-GO" id="P20800">
    <property type="GO annotations" value="7 GO annotations based on evolutionary models"/>
</dbReference>
<dbReference type="PhylomeDB" id="P20800"/>
<dbReference type="TreeFam" id="TF333184"/>
<dbReference type="PathwayCommons" id="P20800"/>
<dbReference type="Reactome" id="R-HSA-375276">
    <property type="pathway name" value="Peptide ligand-binding receptors"/>
</dbReference>
<dbReference type="Reactome" id="R-HSA-416476">
    <property type="pathway name" value="G alpha (q) signalling events"/>
</dbReference>
<dbReference type="SignaLink" id="P20800"/>
<dbReference type="BioGRID-ORCS" id="1907">
    <property type="hits" value="12 hits in 1147 CRISPR screens"/>
</dbReference>
<dbReference type="GeneWiki" id="Endothelin_2"/>
<dbReference type="GenomeRNAi" id="1907"/>
<dbReference type="Pharos" id="P20800">
    <property type="development level" value="Tbio"/>
</dbReference>
<dbReference type="PRO" id="PR:P20800"/>
<dbReference type="Proteomes" id="UP000005640">
    <property type="component" value="Chromosome 1"/>
</dbReference>
<dbReference type="RNAct" id="P20800">
    <property type="molecule type" value="protein"/>
</dbReference>
<dbReference type="Bgee" id="ENSG00000127129">
    <property type="expression patterns" value="Expressed in lower esophagus mucosa and 112 other cell types or tissues"/>
</dbReference>
<dbReference type="GO" id="GO:0005576">
    <property type="term" value="C:extracellular region"/>
    <property type="evidence" value="ECO:0000304"/>
    <property type="project" value="Reactome"/>
</dbReference>
<dbReference type="GO" id="GO:0005615">
    <property type="term" value="C:extracellular space"/>
    <property type="evidence" value="ECO:0000314"/>
    <property type="project" value="BHF-UCL"/>
</dbReference>
<dbReference type="GO" id="GO:0031708">
    <property type="term" value="F:endothelin B receptor binding"/>
    <property type="evidence" value="ECO:0000353"/>
    <property type="project" value="BHF-UCL"/>
</dbReference>
<dbReference type="GO" id="GO:0005179">
    <property type="term" value="F:hormone activity"/>
    <property type="evidence" value="ECO:0000314"/>
    <property type="project" value="BHF-UCL"/>
</dbReference>
<dbReference type="GO" id="GO:0001525">
    <property type="term" value="P:angiogenesis"/>
    <property type="evidence" value="ECO:0007669"/>
    <property type="project" value="Ensembl"/>
</dbReference>
<dbReference type="GO" id="GO:0014824">
    <property type="term" value="P:artery smooth muscle contraction"/>
    <property type="evidence" value="ECO:0000314"/>
    <property type="project" value="BHF-UCL"/>
</dbReference>
<dbReference type="GO" id="GO:0048675">
    <property type="term" value="P:axon extension"/>
    <property type="evidence" value="ECO:0007669"/>
    <property type="project" value="Ensembl"/>
</dbReference>
<dbReference type="GO" id="GO:0007166">
    <property type="term" value="P:cell surface receptor signaling pathway"/>
    <property type="evidence" value="ECO:0000305"/>
    <property type="project" value="BHF-UCL"/>
</dbReference>
<dbReference type="GO" id="GO:0009932">
    <property type="term" value="P:cell tip growth"/>
    <property type="evidence" value="ECO:0007669"/>
    <property type="project" value="Ensembl"/>
</dbReference>
<dbReference type="GO" id="GO:0019221">
    <property type="term" value="P:cytokine-mediated signaling pathway"/>
    <property type="evidence" value="ECO:0000314"/>
    <property type="project" value="BHF-UCL"/>
</dbReference>
<dbReference type="GO" id="GO:0043542">
    <property type="term" value="P:endothelial cell migration"/>
    <property type="evidence" value="ECO:0007669"/>
    <property type="project" value="Ensembl"/>
</dbReference>
<dbReference type="GO" id="GO:0097009">
    <property type="term" value="P:energy homeostasis"/>
    <property type="evidence" value="ECO:0007669"/>
    <property type="project" value="Ensembl"/>
</dbReference>
<dbReference type="GO" id="GO:0003058">
    <property type="term" value="P:hormonal regulation of the force of heart contraction"/>
    <property type="evidence" value="ECO:0000304"/>
    <property type="project" value="BHF-UCL"/>
</dbReference>
<dbReference type="GO" id="GO:0006874">
    <property type="term" value="P:intracellular calcium ion homeostasis"/>
    <property type="evidence" value="ECO:0000318"/>
    <property type="project" value="GO_Central"/>
</dbReference>
<dbReference type="GO" id="GO:0048286">
    <property type="term" value="P:lung alveolus development"/>
    <property type="evidence" value="ECO:0007669"/>
    <property type="project" value="Ensembl"/>
</dbReference>
<dbReference type="GO" id="GO:0042116">
    <property type="term" value="P:macrophage activation"/>
    <property type="evidence" value="ECO:0000314"/>
    <property type="project" value="BHF-UCL"/>
</dbReference>
<dbReference type="GO" id="GO:0048246">
    <property type="term" value="P:macrophage chemotaxis"/>
    <property type="evidence" value="ECO:0000314"/>
    <property type="project" value="BHF-UCL"/>
</dbReference>
<dbReference type="GO" id="GO:0030593">
    <property type="term" value="P:neutrophil chemotaxis"/>
    <property type="evidence" value="ECO:0000314"/>
    <property type="project" value="BHF-UCL"/>
</dbReference>
<dbReference type="GO" id="GO:0050850">
    <property type="term" value="P:positive regulation of calcium-mediated signaling"/>
    <property type="evidence" value="ECO:0000314"/>
    <property type="project" value="BHF-UCL"/>
</dbReference>
<dbReference type="GO" id="GO:0008284">
    <property type="term" value="P:positive regulation of cell population proliferation"/>
    <property type="evidence" value="ECO:0000314"/>
    <property type="project" value="BHF-UCL"/>
</dbReference>
<dbReference type="GO" id="GO:0010460">
    <property type="term" value="P:positive regulation of heart rate"/>
    <property type="evidence" value="ECO:0000314"/>
    <property type="project" value="BHF-UCL"/>
</dbReference>
<dbReference type="GO" id="GO:0002690">
    <property type="term" value="P:positive regulation of leukocyte chemotaxis"/>
    <property type="evidence" value="ECO:0000314"/>
    <property type="project" value="BHF-UCL"/>
</dbReference>
<dbReference type="GO" id="GO:0060585">
    <property type="term" value="P:positive regulation of prostaglandin-endoperoxide synthase activity"/>
    <property type="evidence" value="ECO:0000315"/>
    <property type="project" value="BHF-UCL"/>
</dbReference>
<dbReference type="GO" id="GO:0045987">
    <property type="term" value="P:positive regulation of smooth muscle contraction"/>
    <property type="evidence" value="ECO:0000318"/>
    <property type="project" value="GO_Central"/>
</dbReference>
<dbReference type="GO" id="GO:0003099">
    <property type="term" value="P:positive regulation of the force of heart contraction by chemical signal"/>
    <property type="evidence" value="ECO:0000304"/>
    <property type="project" value="BHF-UCL"/>
</dbReference>
<dbReference type="GO" id="GO:0001516">
    <property type="term" value="P:prostaglandin biosynthetic process"/>
    <property type="evidence" value="ECO:0000314"/>
    <property type="project" value="BHF-UCL"/>
</dbReference>
<dbReference type="GO" id="GO:0003100">
    <property type="term" value="P:regulation of systemic arterial blood pressure by endothelin"/>
    <property type="evidence" value="ECO:0000314"/>
    <property type="project" value="BHF-UCL"/>
</dbReference>
<dbReference type="GO" id="GO:0019229">
    <property type="term" value="P:regulation of vasoconstriction"/>
    <property type="evidence" value="ECO:0007669"/>
    <property type="project" value="InterPro"/>
</dbReference>
<dbReference type="GO" id="GO:0001659">
    <property type="term" value="P:temperature homeostasis"/>
    <property type="evidence" value="ECO:0007669"/>
    <property type="project" value="Ensembl"/>
</dbReference>
<dbReference type="GO" id="GO:0042310">
    <property type="term" value="P:vasoconstriction"/>
    <property type="evidence" value="ECO:0000314"/>
    <property type="project" value="BHF-UCL"/>
</dbReference>
<dbReference type="GO" id="GO:0014826">
    <property type="term" value="P:vein smooth muscle contraction"/>
    <property type="evidence" value="ECO:0000314"/>
    <property type="project" value="BHF-UCL"/>
</dbReference>
<dbReference type="InterPro" id="IPR020475">
    <property type="entry name" value="Endothelin"/>
</dbReference>
<dbReference type="InterPro" id="IPR019764">
    <property type="entry name" value="Endothelin_toxin_CS"/>
</dbReference>
<dbReference type="InterPro" id="IPR001928">
    <property type="entry name" value="Endothln-like_toxin"/>
</dbReference>
<dbReference type="PANTHER" id="PTHR13874">
    <property type="entry name" value="ENDOTHELIN"/>
    <property type="match status" value="1"/>
</dbReference>
<dbReference type="PANTHER" id="PTHR13874:SF9">
    <property type="entry name" value="ENDOTHELIN-2"/>
    <property type="match status" value="1"/>
</dbReference>
<dbReference type="Pfam" id="PF00322">
    <property type="entry name" value="Endothelin"/>
    <property type="match status" value="1"/>
</dbReference>
<dbReference type="PRINTS" id="PR00365">
    <property type="entry name" value="ENDOTHELIN"/>
</dbReference>
<dbReference type="SMART" id="SM00272">
    <property type="entry name" value="END"/>
    <property type="match status" value="2"/>
</dbReference>
<dbReference type="PROSITE" id="PS00270">
    <property type="entry name" value="ENDOTHELIN"/>
    <property type="match status" value="2"/>
</dbReference>
<proteinExistence type="evidence at protein level"/>
<evidence type="ECO:0000250" key="1"/>
<evidence type="ECO:0000255" key="2"/>
<evidence type="ECO:0000256" key="3">
    <source>
        <dbReference type="SAM" id="MobiDB-lite"/>
    </source>
</evidence>
<evidence type="ECO:0000269" key="4">
    <source>
    </source>
</evidence>
<evidence type="ECO:0000269" key="5">
    <source ref="4"/>
</evidence>
<evidence type="ECO:0000305" key="6"/>